<dbReference type="EC" id="2.4.1.-" evidence="4"/>
<dbReference type="EMBL" id="CP001956">
    <property type="protein sequence ID" value="ADE02987.1"/>
    <property type="molecule type" value="Genomic_DNA"/>
</dbReference>
<dbReference type="EMBL" id="AOHU01000028">
    <property type="protein sequence ID" value="ELY35751.1"/>
    <property type="molecule type" value="Genomic_DNA"/>
</dbReference>
<dbReference type="STRING" id="309800.HVO_1526"/>
<dbReference type="PaxDb" id="309800-C498_02985"/>
<dbReference type="EnsemblBacteria" id="ADE02987">
    <property type="protein sequence ID" value="ADE02987"/>
    <property type="gene ID" value="HVO_1526"/>
</dbReference>
<dbReference type="KEGG" id="hvo:HVO_1526"/>
<dbReference type="PATRIC" id="fig|309800.29.peg.573"/>
<dbReference type="eggNOG" id="arCOG02043">
    <property type="taxonomic scope" value="Archaea"/>
</dbReference>
<dbReference type="HOGENOM" id="CLU_607814_0_0_2"/>
<dbReference type="OrthoDB" id="237187at2157"/>
<dbReference type="BioCyc" id="MetaCyc:MONOMER-19289"/>
<dbReference type="BRENDA" id="2.4.1.B58">
    <property type="organism ID" value="2561"/>
</dbReference>
<dbReference type="UniPathway" id="UPA00378"/>
<dbReference type="UniPathway" id="UPA00977"/>
<dbReference type="Proteomes" id="UP000008243">
    <property type="component" value="Chromosome"/>
</dbReference>
<dbReference type="Proteomes" id="UP000011532">
    <property type="component" value="Unassembled WGS sequence"/>
</dbReference>
<dbReference type="GO" id="GO:0005886">
    <property type="term" value="C:plasma membrane"/>
    <property type="evidence" value="ECO:0000314"/>
    <property type="project" value="CACAO"/>
</dbReference>
<dbReference type="GO" id="GO:0004169">
    <property type="term" value="F:dolichyl-phosphate-mannose-protein mannosyltransferase activity"/>
    <property type="evidence" value="ECO:0000314"/>
    <property type="project" value="CACAO"/>
</dbReference>
<dbReference type="GO" id="GO:0045232">
    <property type="term" value="P:S-layer organization"/>
    <property type="evidence" value="ECO:0007669"/>
    <property type="project" value="UniProtKB-UniPathway"/>
</dbReference>
<dbReference type="InterPro" id="IPR031897">
    <property type="entry name" value="AglS"/>
</dbReference>
<dbReference type="Pfam" id="PF15971">
    <property type="entry name" value="Mannosyl_trans4"/>
    <property type="match status" value="1"/>
</dbReference>
<proteinExistence type="evidence at protein level"/>
<sequence length="457" mass="50656">MKRLAKAAFSQNSLTAPIVSTFVYLISVVRVVLNGNWPVTSSDTAMFQHIGWMVFSGKRYYIDAWDPKPPLTLELATIIAYISNGDPHLQHTLSVVSTIVAGILLTYLISHITSEITGNQFAGLLSGIVFITFPVIHYSAVFGYEPKYFVFLFGLGSIYLSRNPKPILSGAAAAASAGMWQFAIIFPIISFGIISRRKSKDLILKYVFGATIIAFISLLPIYLQGGLVAMTVEVIIAPLYAGETQSFLYRLVKGVTHLKLMIPIALLGMAGILLGFLDDIRERWWVVGLLLWFCIQIFILDYDGADDLFLGIILVSMGIGFAFEKLSTKYESERINSIVTAVVVCMLIWQVVTLGGVGVITNPYSYSGDGPDQAILESGIQQFAHLSGYTEYTIGGSPPDEQYNVKSRYGPDKIEELFFTSTIPSTCHYRLSGMELEWMNLTEQSFTEEKCGKWRLP</sequence>
<keyword id="KW-1003">Cell membrane</keyword>
<keyword id="KW-0328">Glycosyltransferase</keyword>
<keyword id="KW-0472">Membrane</keyword>
<keyword id="KW-1185">Reference proteome</keyword>
<keyword id="KW-0808">Transferase</keyword>
<keyword id="KW-0812">Transmembrane</keyword>
<keyword id="KW-1133">Transmembrane helix</keyword>
<comment type="function">
    <text evidence="2">Involved in the assembly of a N-linked pentasaccharide that decorates the S-layer glycoprotein and flagellins. Transfers mannose, the terminal pentasaccharide residue, from its dedicated dolichol phosphate carrier to the protein-bound glycan comprising the first four subunits of the N-linked pentasaccharide.</text>
</comment>
<comment type="pathway">
    <text evidence="2">Cell surface structure biogenesis; S-layer biogenesis.</text>
</comment>
<comment type="pathway">
    <text evidence="2">Protein modification; protein glycosylation.</text>
</comment>
<comment type="subcellular location">
    <subcellularLocation>
        <location evidence="2">Cell membrane</location>
        <topology evidence="2">Multi-pass membrane protein</topology>
    </subcellularLocation>
</comment>
<comment type="disruption phenotype">
    <text evidence="2">Mutants lack the final mannose subunit of the N-linked pentasaccharide.</text>
</comment>
<evidence type="ECO:0000255" key="1"/>
<evidence type="ECO:0000269" key="2">
    <source>
    </source>
</evidence>
<evidence type="ECO:0000303" key="3">
    <source>
    </source>
</evidence>
<evidence type="ECO:0000305" key="4">
    <source>
    </source>
</evidence>
<accession>D4GYH0</accession>
<protein>
    <recommendedName>
        <fullName evidence="3">Dolichol phosphate-mannose mannosyltransferase</fullName>
        <ecNumber evidence="4">2.4.1.-</ecNumber>
    </recommendedName>
    <alternativeName>
        <fullName>Archaeal glycosylation protein S</fullName>
    </alternativeName>
</protein>
<gene>
    <name type="primary">aglS</name>
    <name type="ordered locus">HVO_1526</name>
    <name type="ORF">C498_02985</name>
</gene>
<name>AGLS_HALVD</name>
<organism>
    <name type="scientific">Haloferax volcanii (strain ATCC 29605 / DSM 3757 / JCM 8879 / NBRC 14742 / NCIMB 2012 / VKM B-1768 / DS2)</name>
    <name type="common">Halobacterium volcanii</name>
    <dbReference type="NCBI Taxonomy" id="309800"/>
    <lineage>
        <taxon>Archaea</taxon>
        <taxon>Methanobacteriati</taxon>
        <taxon>Methanobacteriota</taxon>
        <taxon>Stenosarchaea group</taxon>
        <taxon>Halobacteria</taxon>
        <taxon>Halobacteriales</taxon>
        <taxon>Haloferacaceae</taxon>
        <taxon>Haloferax</taxon>
    </lineage>
</organism>
<reference key="1">
    <citation type="journal article" date="2010" name="PLoS ONE">
        <title>The complete genome sequence of Haloferax volcanii DS2, a model archaeon.</title>
        <authorList>
            <person name="Hartman A.L."/>
            <person name="Norais C."/>
            <person name="Badger J.H."/>
            <person name="Delmas S."/>
            <person name="Haldenby S."/>
            <person name="Madupu R."/>
            <person name="Robinson J."/>
            <person name="Khouri H."/>
            <person name="Ren Q."/>
            <person name="Lowe T.M."/>
            <person name="Maupin-Furlow J."/>
            <person name="Pohlschroder M."/>
            <person name="Daniels C."/>
            <person name="Pfeiffer F."/>
            <person name="Allers T."/>
            <person name="Eisen J.A."/>
        </authorList>
    </citation>
    <scope>NUCLEOTIDE SEQUENCE [LARGE SCALE GENOMIC DNA]</scope>
    <source>
        <strain>ATCC 29605 / DSM 3757 / JCM 8879 / NBRC 14742 / NCIMB 2012 / VKM B-1768 / DS2</strain>
    </source>
</reference>
<reference key="2">
    <citation type="journal article" date="2014" name="PLoS Genet.">
        <title>Phylogenetically driven sequencing of extremely halophilic archaea reveals strategies for static and dynamic osmo-response.</title>
        <authorList>
            <person name="Becker E.A."/>
            <person name="Seitzer P.M."/>
            <person name="Tritt A."/>
            <person name="Larsen D."/>
            <person name="Krusor M."/>
            <person name="Yao A.I."/>
            <person name="Wu D."/>
            <person name="Madern D."/>
            <person name="Eisen J.A."/>
            <person name="Darling A.E."/>
            <person name="Facciotti M.T."/>
        </authorList>
    </citation>
    <scope>NUCLEOTIDE SEQUENCE [LARGE SCALE GENOMIC DNA]</scope>
    <source>
        <strain>ATCC 29605 / DSM 3757 / JCM 8879 / NBRC 14742 / NCIMB 2012 / VKM B-1768 / DS2</strain>
    </source>
</reference>
<reference key="3">
    <citation type="journal article" date="2012" name="J. Bacteriol.">
        <title>N-glycosylation of Haloferax volcanii flagellins requires known Agl proteins and is essential for biosynthesis of stable flagella.</title>
        <authorList>
            <person name="Tripepi M."/>
            <person name="You J."/>
            <person name="Temel S."/>
            <person name="Onder O."/>
            <person name="Brisson D."/>
            <person name="Pohlschroder M."/>
        </authorList>
    </citation>
    <scope>PROBABLE FUNCTION IN GLYCOSYLATION OF FLAGELLINS</scope>
    <source>
        <strain>H53</strain>
    </source>
</reference>
<reference key="4">
    <citation type="journal article" date="2012" name="J. Bacteriol.">
        <title>AglS, a novel component of the Haloferax volcanii N-glycosylation pathway, is a dolichol phosphate-mannose mannosyltransferase.</title>
        <authorList>
            <person name="Cohen-Rosenzweig C."/>
            <person name="Yurist-Doutsch S."/>
            <person name="Eichler J."/>
        </authorList>
    </citation>
    <scope>FUNCTION</scope>
    <scope>PATHWAY</scope>
    <scope>SUBCELLULAR LOCATION</scope>
    <scope>TOPOLOGY</scope>
    <scope>DISRUPTION PHENOTYPE</scope>
    <scope>GENE NAME</scope>
    <source>
        <strain>H53</strain>
    </source>
</reference>
<feature type="chain" id="PRO_0000422306" description="Dolichol phosphate-mannose mannosyltransferase">
    <location>
        <begin position="1"/>
        <end position="457"/>
    </location>
</feature>
<feature type="topological domain" description="Cytoplasmic" evidence="1">
    <location>
        <begin position="1"/>
        <end position="12"/>
    </location>
</feature>
<feature type="transmembrane region" description="Helical" evidence="1">
    <location>
        <begin position="13"/>
        <end position="33"/>
    </location>
</feature>
<feature type="topological domain" description="Extracellular" evidence="1">
    <location>
        <begin position="34"/>
        <end position="91"/>
    </location>
</feature>
<feature type="transmembrane region" description="Helical" evidence="1">
    <location>
        <begin position="92"/>
        <end position="112"/>
    </location>
</feature>
<feature type="topological domain" description="Cytoplasmic" evidence="1">
    <location>
        <begin position="113"/>
        <end position="120"/>
    </location>
</feature>
<feature type="transmembrane region" description="Helical" evidence="1">
    <location>
        <begin position="121"/>
        <end position="141"/>
    </location>
</feature>
<feature type="topological domain" description="Extracellular" evidence="1">
    <location>
        <begin position="142"/>
        <end position="173"/>
    </location>
</feature>
<feature type="transmembrane region" description="Helical" evidence="1">
    <location>
        <begin position="174"/>
        <end position="194"/>
    </location>
</feature>
<feature type="topological domain" description="Cytoplasmic" evidence="1">
    <location>
        <begin position="195"/>
        <end position="211"/>
    </location>
</feature>
<feature type="transmembrane region" description="Helical" evidence="1">
    <location>
        <begin position="212"/>
        <end position="232"/>
    </location>
</feature>
<feature type="topological domain" description="Extracellular" evidence="1">
    <location>
        <begin position="233"/>
        <end position="259"/>
    </location>
</feature>
<feature type="transmembrane region" description="Helical" evidence="1">
    <location>
        <begin position="260"/>
        <end position="280"/>
    </location>
</feature>
<feature type="topological domain" description="Cytoplasmic" evidence="1">
    <location>
        <begin position="281"/>
        <end position="283"/>
    </location>
</feature>
<feature type="transmembrane region" description="Helical" evidence="1">
    <location>
        <begin position="284"/>
        <end position="304"/>
    </location>
</feature>
<feature type="topological domain" description="Extracellular" evidence="1">
    <location>
        <begin position="305"/>
        <end position="307"/>
    </location>
</feature>
<feature type="transmembrane region" description="Helical" evidence="1">
    <location>
        <begin position="308"/>
        <end position="328"/>
    </location>
</feature>
<feature type="topological domain" description="Cytoplasmic" evidence="1">
    <location>
        <begin position="329"/>
        <end position="337"/>
    </location>
</feature>
<feature type="transmembrane region" description="Helical" evidence="1">
    <location>
        <begin position="338"/>
        <end position="358"/>
    </location>
</feature>
<feature type="topological domain" description="Extracellular" evidence="1">
    <location>
        <begin position="359"/>
        <end position="457"/>
    </location>
</feature>